<protein>
    <recommendedName>
        <fullName>Alanine aminotransferase 2</fullName>
        <shortName>ALT2</shortName>
        <ecNumber>2.6.1.2</ecNumber>
    </recommendedName>
    <alternativeName>
        <fullName>Glutamate pyruvate transaminase 2</fullName>
        <shortName>GPT 2</shortName>
    </alternativeName>
    <alternativeName>
        <fullName>Glutamic--alanine transaminase 2</fullName>
    </alternativeName>
    <alternativeName>
        <fullName>Glutamic--pyruvic transaminase 2</fullName>
    </alternativeName>
</protein>
<sequence>MSILRGSLRGVLAPNASVVFRSRLPPQLTSALLCPLRSLSGTPLAEPDGKVTRKMSENGTCNRILTLDSMNPCIQKVEYAVRGPIVIRAVELEKELQQGVKKPFTEVIKANIGDAHAMGQKPVTFLRQVSAICLYPELMNDNKFPEDVKQKAARILQACGGHSIGAYSASQGIEVIRQDVAKYIERRDGGILSDPNNIYLSTGASDSIVTMLKLLVSGQGKSRTGVMIPIPQYPLYSAALAELDAVQVNYYLDEENCWALDINELRRALAEARKHCDPKVLCIINPGNPTGQVQSRKCIEDVIRFAAEENLFLMADEVYQDNVYAKGCAFHSFKKVLFEMGPKYSETLELASFHSTSKGYMGECGFRGGYMEVINMDPAVKQQLTKLVSVRLCPPVPGQVLLDVIVNPPKPGEPSYKQFISEKQAVLNNLAEKARLTEEILNQAPGIRCNPVQGAMYSFPRIHIPEKAIKLAQAEGQAPDMFFCMKLLEETGICVVPGSGFGQREGTHHFRMTILPPTDKLKSLLERLKDFHQKFMDEYS</sequence>
<dbReference type="EC" id="2.6.1.2"/>
<dbReference type="EMBL" id="BC074194">
    <property type="protein sequence ID" value="AAH74194.1"/>
    <property type="molecule type" value="mRNA"/>
</dbReference>
<dbReference type="RefSeq" id="NP_001086104.1">
    <property type="nucleotide sequence ID" value="NM_001092635.1"/>
</dbReference>
<dbReference type="SMR" id="Q6GM82"/>
<dbReference type="GeneID" id="444533"/>
<dbReference type="KEGG" id="xla:444533"/>
<dbReference type="AGR" id="Xenbase:XB-GENE-5824402"/>
<dbReference type="CTD" id="444533"/>
<dbReference type="Xenbase" id="XB-GENE-5824402">
    <property type="gene designation" value="gpt.L"/>
</dbReference>
<dbReference type="OrthoDB" id="1732682at2759"/>
<dbReference type="UniPathway" id="UPA00528">
    <property type="reaction ID" value="UER00586"/>
</dbReference>
<dbReference type="Proteomes" id="UP000186698">
    <property type="component" value="Chromosome 6L"/>
</dbReference>
<dbReference type="Bgee" id="444533">
    <property type="expression patterns" value="Expressed in kidney and 19 other cell types or tissues"/>
</dbReference>
<dbReference type="GO" id="GO:0004021">
    <property type="term" value="F:L-alanine:2-oxoglutarate aminotransferase activity"/>
    <property type="evidence" value="ECO:0000250"/>
    <property type="project" value="UniProtKB"/>
</dbReference>
<dbReference type="GO" id="GO:0030170">
    <property type="term" value="F:pyridoxal phosphate binding"/>
    <property type="evidence" value="ECO:0007669"/>
    <property type="project" value="InterPro"/>
</dbReference>
<dbReference type="GO" id="GO:0006103">
    <property type="term" value="P:2-oxoglutarate metabolic process"/>
    <property type="evidence" value="ECO:0000250"/>
    <property type="project" value="UniProtKB"/>
</dbReference>
<dbReference type="GO" id="GO:0009058">
    <property type="term" value="P:biosynthetic process"/>
    <property type="evidence" value="ECO:0007669"/>
    <property type="project" value="InterPro"/>
</dbReference>
<dbReference type="GO" id="GO:0042853">
    <property type="term" value="P:L-alanine catabolic process"/>
    <property type="evidence" value="ECO:0007669"/>
    <property type="project" value="UniProtKB-UniPathway"/>
</dbReference>
<dbReference type="GO" id="GO:0042851">
    <property type="term" value="P:L-alanine metabolic process"/>
    <property type="evidence" value="ECO:0000250"/>
    <property type="project" value="UniProtKB"/>
</dbReference>
<dbReference type="CDD" id="cd00609">
    <property type="entry name" value="AAT_like"/>
    <property type="match status" value="1"/>
</dbReference>
<dbReference type="FunFam" id="1.10.287.1970:FF:000001">
    <property type="entry name" value="Alanine aminotransferase 2"/>
    <property type="match status" value="1"/>
</dbReference>
<dbReference type="FunFam" id="3.40.640.10:FF:000226">
    <property type="entry name" value="Alanine aminotransferase 2"/>
    <property type="match status" value="1"/>
</dbReference>
<dbReference type="FunFam" id="3.90.1150.10:FF:000345">
    <property type="entry name" value="Alanine aminotransferase 2"/>
    <property type="match status" value="1"/>
</dbReference>
<dbReference type="Gene3D" id="1.10.287.1970">
    <property type="match status" value="1"/>
</dbReference>
<dbReference type="Gene3D" id="3.90.1150.10">
    <property type="entry name" value="Aspartate Aminotransferase, domain 1"/>
    <property type="match status" value="1"/>
</dbReference>
<dbReference type="Gene3D" id="3.40.640.10">
    <property type="entry name" value="Type I PLP-dependent aspartate aminotransferase-like (Major domain)"/>
    <property type="match status" value="1"/>
</dbReference>
<dbReference type="InterPro" id="IPR045088">
    <property type="entry name" value="ALAT1/2-like"/>
</dbReference>
<dbReference type="InterPro" id="IPR004839">
    <property type="entry name" value="Aminotransferase_I/II_large"/>
</dbReference>
<dbReference type="InterPro" id="IPR015424">
    <property type="entry name" value="PyrdxlP-dep_Trfase"/>
</dbReference>
<dbReference type="InterPro" id="IPR015421">
    <property type="entry name" value="PyrdxlP-dep_Trfase_major"/>
</dbReference>
<dbReference type="InterPro" id="IPR015422">
    <property type="entry name" value="PyrdxlP-dep_Trfase_small"/>
</dbReference>
<dbReference type="PANTHER" id="PTHR11751">
    <property type="entry name" value="ALANINE AMINOTRANSFERASE"/>
    <property type="match status" value="1"/>
</dbReference>
<dbReference type="PANTHER" id="PTHR11751:SF308">
    <property type="entry name" value="ALANINE AMINOTRANSFERASE 1"/>
    <property type="match status" value="1"/>
</dbReference>
<dbReference type="Pfam" id="PF00155">
    <property type="entry name" value="Aminotran_1_2"/>
    <property type="match status" value="1"/>
</dbReference>
<dbReference type="SUPFAM" id="SSF53383">
    <property type="entry name" value="PLP-dependent transferases"/>
    <property type="match status" value="1"/>
</dbReference>
<feature type="chain" id="PRO_0000247535" description="Alanine aminotransferase 2">
    <location>
        <begin position="1"/>
        <end position="540"/>
    </location>
</feature>
<feature type="modified residue" description="N6-(pyridoxal phosphate)lysine" evidence="1">
    <location>
        <position position="358"/>
    </location>
</feature>
<comment type="function">
    <text evidence="1">Catalyzes the reversible transamination between alanine and 2-oxoglutarate to form pyruvate and glutamate.</text>
</comment>
<comment type="catalytic activity">
    <reaction>
        <text>L-alanine + 2-oxoglutarate = pyruvate + L-glutamate</text>
        <dbReference type="Rhea" id="RHEA:19453"/>
        <dbReference type="ChEBI" id="CHEBI:15361"/>
        <dbReference type="ChEBI" id="CHEBI:16810"/>
        <dbReference type="ChEBI" id="CHEBI:29985"/>
        <dbReference type="ChEBI" id="CHEBI:57972"/>
        <dbReference type="EC" id="2.6.1.2"/>
    </reaction>
</comment>
<comment type="cofactor">
    <cofactor evidence="1">
        <name>pyridoxal 5'-phosphate</name>
        <dbReference type="ChEBI" id="CHEBI:597326"/>
    </cofactor>
</comment>
<comment type="pathway">
    <text>Amino-acid degradation; L-alanine degradation via transaminase pathway; pyruvate from L-alanine: step 1/1.</text>
</comment>
<comment type="subunit">
    <text evidence="1">Homodimer.</text>
</comment>
<comment type="similarity">
    <text evidence="2">Belongs to the class-I pyridoxal-phosphate-dependent aminotransferase family. Alanine aminotransferase subfamily.</text>
</comment>
<gene>
    <name type="primary">gpt2</name>
</gene>
<keyword id="KW-0032">Aminotransferase</keyword>
<keyword id="KW-0663">Pyridoxal phosphate</keyword>
<keyword id="KW-1185">Reference proteome</keyword>
<keyword id="KW-0808">Transferase</keyword>
<proteinExistence type="evidence at transcript level"/>
<organism>
    <name type="scientific">Xenopus laevis</name>
    <name type="common">African clawed frog</name>
    <dbReference type="NCBI Taxonomy" id="8355"/>
    <lineage>
        <taxon>Eukaryota</taxon>
        <taxon>Metazoa</taxon>
        <taxon>Chordata</taxon>
        <taxon>Craniata</taxon>
        <taxon>Vertebrata</taxon>
        <taxon>Euteleostomi</taxon>
        <taxon>Amphibia</taxon>
        <taxon>Batrachia</taxon>
        <taxon>Anura</taxon>
        <taxon>Pipoidea</taxon>
        <taxon>Pipidae</taxon>
        <taxon>Xenopodinae</taxon>
        <taxon>Xenopus</taxon>
        <taxon>Xenopus</taxon>
    </lineage>
</organism>
<reference key="1">
    <citation type="submission" date="2004-06" db="EMBL/GenBank/DDBJ databases">
        <authorList>
            <consortium name="NIH - Xenopus Gene Collection (XGC) project"/>
        </authorList>
    </citation>
    <scope>NUCLEOTIDE SEQUENCE [LARGE SCALE MRNA]</scope>
    <source>
        <tissue>Kidney</tissue>
    </source>
</reference>
<name>ALAT2_XENLA</name>
<accession>Q6GM82</accession>
<evidence type="ECO:0000250" key="1"/>
<evidence type="ECO:0000305" key="2"/>